<comment type="function">
    <text evidence="1">RuBisCO catalyzes two reactions: the carboxylation of D-ribulose 1,5-bisphosphate, the primary event in carbon dioxide fixation, as well as the oxidative fragmentation of the pentose substrate in the photorespiration process. Both reactions occur simultaneously and in competition at the same active site.</text>
</comment>
<comment type="catalytic activity">
    <reaction evidence="1">
        <text>2 (2R)-3-phosphoglycerate + 2 H(+) = D-ribulose 1,5-bisphosphate + CO2 + H2O</text>
        <dbReference type="Rhea" id="RHEA:23124"/>
        <dbReference type="ChEBI" id="CHEBI:15377"/>
        <dbReference type="ChEBI" id="CHEBI:15378"/>
        <dbReference type="ChEBI" id="CHEBI:16526"/>
        <dbReference type="ChEBI" id="CHEBI:57870"/>
        <dbReference type="ChEBI" id="CHEBI:58272"/>
        <dbReference type="EC" id="4.1.1.39"/>
    </reaction>
</comment>
<comment type="catalytic activity">
    <reaction evidence="1">
        <text>D-ribulose 1,5-bisphosphate + O2 = 2-phosphoglycolate + (2R)-3-phosphoglycerate + 2 H(+)</text>
        <dbReference type="Rhea" id="RHEA:36631"/>
        <dbReference type="ChEBI" id="CHEBI:15378"/>
        <dbReference type="ChEBI" id="CHEBI:15379"/>
        <dbReference type="ChEBI" id="CHEBI:57870"/>
        <dbReference type="ChEBI" id="CHEBI:58033"/>
        <dbReference type="ChEBI" id="CHEBI:58272"/>
    </reaction>
</comment>
<comment type="cofactor">
    <cofactor evidence="1">
        <name>Mg(2+)</name>
        <dbReference type="ChEBI" id="CHEBI:18420"/>
    </cofactor>
    <text evidence="1">Binds 1 Mg(2+) ion per subunit.</text>
</comment>
<comment type="subunit">
    <text evidence="1">Heterohexadecamer of 8 large chains and 8 small chains; disulfide-linked. The disulfide link is formed within the large subunit homodimers.</text>
</comment>
<comment type="subcellular location">
    <subcellularLocation>
        <location>Plastid</location>
        <location>Chloroplast</location>
    </subcellularLocation>
</comment>
<comment type="PTM">
    <text evidence="1">The disulfide bond which can form in the large chain dimeric partners within the hexadecamer appears to be associated with oxidative stress and protein turnover.</text>
</comment>
<comment type="miscellaneous">
    <text evidence="1">The basic functional RuBisCO is composed of a large chain homodimer in a 'head-to-tail' conformation. In form I RuBisCO this homodimer is arranged in a barrel-like tetramer with the small subunits forming a tetrameric 'cap' on each end of the 'barrel'.</text>
</comment>
<comment type="similarity">
    <text evidence="1">Belongs to the RuBisCO large chain family. Type I subfamily.</text>
</comment>
<sequence length="453" mass="50263">MSPQTETKAGVGFKAGVKEYKLTYYTPEYETKDTDILAAFRVTPQPGVPPEERGAAVAAESSTGTWTTVWTDGLTSLDRYKGRCYHIEPVPGEEEQFIAYVAYPLDLFEEGSVTNMFTSIVGNVFGFKALRALRLEDLRIPVAYVKTFQGPPHGIQVERDKLNKYGRPLLGCTIKPKLGLSAKNYGRAVYECLRGGLDFTKDDENVNSQPFMRWRDRFLFCAEAIYKSQAETGEIKGHYLNATAGTCEDMMKRAVFARELGVPIVMHDYLTGGFTANTTLAHYCRDNGLLLHIHRAMHAVIDRQKNHGMHFRVLAKALRMSGGDHIHAGTVVGKLEGERDITLGFVDLLRDDYIEKDRSRGIYFTQDWVSLPGVLPVASRGIHVWHMPALTEIFGDDSVLQFGGGTLGHPWGNAPGAVANRVALEACVKARNEGRDLAVDGGDIIREACKWSP</sequence>
<keyword id="KW-0007">Acetylation</keyword>
<keyword id="KW-0113">Calvin cycle</keyword>
<keyword id="KW-0120">Carbon dioxide fixation</keyword>
<keyword id="KW-0150">Chloroplast</keyword>
<keyword id="KW-1015">Disulfide bond</keyword>
<keyword id="KW-0456">Lyase</keyword>
<keyword id="KW-0460">Magnesium</keyword>
<keyword id="KW-0479">Metal-binding</keyword>
<keyword id="KW-0488">Methylation</keyword>
<keyword id="KW-0503">Monooxygenase</keyword>
<keyword id="KW-0560">Oxidoreductase</keyword>
<keyword id="KW-0601">Photorespiration</keyword>
<keyword id="KW-0602">Photosynthesis</keyword>
<keyword id="KW-0934">Plastid</keyword>
<gene>
    <name evidence="1" type="primary">rbcL</name>
</gene>
<protein>
    <recommendedName>
        <fullName evidence="1">Ribulose bisphosphate carboxylase large chain</fullName>
        <shortName evidence="1">RuBisCO large subunit</shortName>
        <ecNumber evidence="1">4.1.1.39</ecNumber>
    </recommendedName>
</protein>
<proteinExistence type="inferred from homology"/>
<feature type="propeptide" id="PRO_0000031123" evidence="1">
    <location>
        <begin position="1"/>
        <end position="2"/>
    </location>
</feature>
<feature type="chain" id="PRO_0000031124" description="Ribulose bisphosphate carboxylase large chain">
    <location>
        <begin position="3"/>
        <end position="453" status="greater than"/>
    </location>
</feature>
<feature type="active site" description="Proton acceptor" evidence="1">
    <location>
        <position position="175"/>
    </location>
</feature>
<feature type="active site" description="Proton acceptor" evidence="1">
    <location>
        <position position="294"/>
    </location>
</feature>
<feature type="binding site" description="in homodimeric partner" evidence="1">
    <location>
        <position position="123"/>
    </location>
    <ligand>
        <name>substrate</name>
    </ligand>
</feature>
<feature type="binding site" evidence="1">
    <location>
        <position position="173"/>
    </location>
    <ligand>
        <name>substrate</name>
    </ligand>
</feature>
<feature type="binding site" evidence="1">
    <location>
        <position position="177"/>
    </location>
    <ligand>
        <name>substrate</name>
    </ligand>
</feature>
<feature type="binding site" description="via carbamate group" evidence="1">
    <location>
        <position position="201"/>
    </location>
    <ligand>
        <name>Mg(2+)</name>
        <dbReference type="ChEBI" id="CHEBI:18420"/>
    </ligand>
</feature>
<feature type="binding site" evidence="1">
    <location>
        <position position="203"/>
    </location>
    <ligand>
        <name>Mg(2+)</name>
        <dbReference type="ChEBI" id="CHEBI:18420"/>
    </ligand>
</feature>
<feature type="binding site" evidence="1">
    <location>
        <position position="204"/>
    </location>
    <ligand>
        <name>Mg(2+)</name>
        <dbReference type="ChEBI" id="CHEBI:18420"/>
    </ligand>
</feature>
<feature type="binding site" evidence="1">
    <location>
        <position position="295"/>
    </location>
    <ligand>
        <name>substrate</name>
    </ligand>
</feature>
<feature type="binding site" evidence="1">
    <location>
        <position position="327"/>
    </location>
    <ligand>
        <name>substrate</name>
    </ligand>
</feature>
<feature type="binding site" evidence="1">
    <location>
        <position position="379"/>
    </location>
    <ligand>
        <name>substrate</name>
    </ligand>
</feature>
<feature type="site" description="Transition state stabilizer" evidence="1">
    <location>
        <position position="334"/>
    </location>
</feature>
<feature type="modified residue" description="N-acetylproline" evidence="1">
    <location>
        <position position="3"/>
    </location>
</feature>
<feature type="modified residue" description="N6,N6,N6-trimethyllysine" evidence="1">
    <location>
        <position position="14"/>
    </location>
</feature>
<feature type="modified residue" description="N6-carboxylysine" evidence="1">
    <location>
        <position position="201"/>
    </location>
</feature>
<feature type="disulfide bond" description="Interchain; in linked form" evidence="1">
    <location>
        <position position="247"/>
    </location>
</feature>
<feature type="non-terminal residue">
    <location>
        <position position="453"/>
    </location>
</feature>
<organism>
    <name type="scientific">Asperula laevigata</name>
    <name type="common">Smooth woodruff</name>
    <dbReference type="NCBI Taxonomy" id="29781"/>
    <lineage>
        <taxon>Eukaryota</taxon>
        <taxon>Viridiplantae</taxon>
        <taxon>Streptophyta</taxon>
        <taxon>Embryophyta</taxon>
        <taxon>Tracheophyta</taxon>
        <taxon>Spermatophyta</taxon>
        <taxon>Magnoliopsida</taxon>
        <taxon>eudicotyledons</taxon>
        <taxon>Gunneridae</taxon>
        <taxon>Pentapetalae</taxon>
        <taxon>asterids</taxon>
        <taxon>lamiids</taxon>
        <taxon>Gentianales</taxon>
        <taxon>Rubiaceae</taxon>
        <taxon>Rubioideae</taxon>
        <taxon>Rubieae</taxon>
        <taxon>Asperula</taxon>
    </lineage>
</organism>
<evidence type="ECO:0000255" key="1">
    <source>
        <dbReference type="HAMAP-Rule" id="MF_01338"/>
    </source>
</evidence>
<name>RBL_ASPLA</name>
<accession>Q31809</accession>
<dbReference type="EC" id="4.1.1.39" evidence="1"/>
<dbReference type="EMBL" id="X81092">
    <property type="protein sequence ID" value="CAA56998.1"/>
    <property type="molecule type" value="Genomic_DNA"/>
</dbReference>
<dbReference type="PIR" id="S47221">
    <property type="entry name" value="S47221"/>
</dbReference>
<dbReference type="SMR" id="Q31809"/>
<dbReference type="GO" id="GO:0009507">
    <property type="term" value="C:chloroplast"/>
    <property type="evidence" value="ECO:0007669"/>
    <property type="project" value="UniProtKB-SubCell"/>
</dbReference>
<dbReference type="GO" id="GO:0000287">
    <property type="term" value="F:magnesium ion binding"/>
    <property type="evidence" value="ECO:0007669"/>
    <property type="project" value="InterPro"/>
</dbReference>
<dbReference type="GO" id="GO:0004497">
    <property type="term" value="F:monooxygenase activity"/>
    <property type="evidence" value="ECO:0007669"/>
    <property type="project" value="UniProtKB-KW"/>
</dbReference>
<dbReference type="GO" id="GO:0016984">
    <property type="term" value="F:ribulose-bisphosphate carboxylase activity"/>
    <property type="evidence" value="ECO:0007669"/>
    <property type="project" value="UniProtKB-EC"/>
</dbReference>
<dbReference type="GO" id="GO:0009853">
    <property type="term" value="P:photorespiration"/>
    <property type="evidence" value="ECO:0007669"/>
    <property type="project" value="UniProtKB-KW"/>
</dbReference>
<dbReference type="GO" id="GO:0019253">
    <property type="term" value="P:reductive pentose-phosphate cycle"/>
    <property type="evidence" value="ECO:0007669"/>
    <property type="project" value="UniProtKB-KW"/>
</dbReference>
<dbReference type="CDD" id="cd08212">
    <property type="entry name" value="RuBisCO_large_I"/>
    <property type="match status" value="1"/>
</dbReference>
<dbReference type="FunFam" id="3.20.20.110:FF:000003">
    <property type="entry name" value="Ribulose bisphosphate carboxylase large chain"/>
    <property type="match status" value="1"/>
</dbReference>
<dbReference type="FunFam" id="3.30.70.150:FF:000001">
    <property type="entry name" value="Ribulose bisphosphate carboxylase large chain"/>
    <property type="match status" value="1"/>
</dbReference>
<dbReference type="Gene3D" id="3.20.20.110">
    <property type="entry name" value="Ribulose bisphosphate carboxylase, large subunit, C-terminal domain"/>
    <property type="match status" value="1"/>
</dbReference>
<dbReference type="Gene3D" id="3.30.70.150">
    <property type="entry name" value="RuBisCO large subunit, N-terminal domain"/>
    <property type="match status" value="1"/>
</dbReference>
<dbReference type="HAMAP" id="MF_01338">
    <property type="entry name" value="RuBisCO_L_type1"/>
    <property type="match status" value="1"/>
</dbReference>
<dbReference type="InterPro" id="IPR033966">
    <property type="entry name" value="RuBisCO"/>
</dbReference>
<dbReference type="InterPro" id="IPR020878">
    <property type="entry name" value="RuBisCo_large_chain_AS"/>
</dbReference>
<dbReference type="InterPro" id="IPR000685">
    <property type="entry name" value="RuBisCO_lsu_C"/>
</dbReference>
<dbReference type="InterPro" id="IPR036376">
    <property type="entry name" value="RuBisCO_lsu_C_sf"/>
</dbReference>
<dbReference type="InterPro" id="IPR017443">
    <property type="entry name" value="RuBisCO_lsu_fd_N"/>
</dbReference>
<dbReference type="InterPro" id="IPR036422">
    <property type="entry name" value="RuBisCO_lsu_N_sf"/>
</dbReference>
<dbReference type="InterPro" id="IPR020888">
    <property type="entry name" value="RuBisCO_lsuI"/>
</dbReference>
<dbReference type="NCBIfam" id="NF003252">
    <property type="entry name" value="PRK04208.1"/>
    <property type="match status" value="1"/>
</dbReference>
<dbReference type="PANTHER" id="PTHR42704">
    <property type="entry name" value="RIBULOSE BISPHOSPHATE CARBOXYLASE"/>
    <property type="match status" value="1"/>
</dbReference>
<dbReference type="PANTHER" id="PTHR42704:SF15">
    <property type="entry name" value="RIBULOSE BISPHOSPHATE CARBOXYLASE LARGE CHAIN"/>
    <property type="match status" value="1"/>
</dbReference>
<dbReference type="Pfam" id="PF00016">
    <property type="entry name" value="RuBisCO_large"/>
    <property type="match status" value="1"/>
</dbReference>
<dbReference type="Pfam" id="PF02788">
    <property type="entry name" value="RuBisCO_large_N"/>
    <property type="match status" value="1"/>
</dbReference>
<dbReference type="SFLD" id="SFLDG01052">
    <property type="entry name" value="RuBisCO"/>
    <property type="match status" value="1"/>
</dbReference>
<dbReference type="SFLD" id="SFLDS00014">
    <property type="entry name" value="RuBisCO"/>
    <property type="match status" value="1"/>
</dbReference>
<dbReference type="SFLD" id="SFLDG00301">
    <property type="entry name" value="RuBisCO-like_proteins"/>
    <property type="match status" value="1"/>
</dbReference>
<dbReference type="SUPFAM" id="SSF51649">
    <property type="entry name" value="RuBisCo, C-terminal domain"/>
    <property type="match status" value="1"/>
</dbReference>
<dbReference type="SUPFAM" id="SSF54966">
    <property type="entry name" value="RuBisCO, large subunit, small (N-terminal) domain"/>
    <property type="match status" value="1"/>
</dbReference>
<dbReference type="PROSITE" id="PS00157">
    <property type="entry name" value="RUBISCO_LARGE"/>
    <property type="match status" value="1"/>
</dbReference>
<geneLocation type="chloroplast"/>
<reference key="1">
    <citation type="journal article" date="1995" name="J. Mol. Evol.">
        <title>Comparison of the evolution of ribulose-1, 5-biphosphate carboxylase (rbcL) and atpB-rbcL noncoding spacer sequences in a recent plant group, the tribe Rubieae (Rubiaceae).</title>
        <authorList>
            <person name="Manen J.F."/>
            <person name="Natali A."/>
        </authorList>
    </citation>
    <scope>NUCLEOTIDE SEQUENCE [GENOMIC DNA]</scope>
</reference>